<reference key="1">
    <citation type="journal article" date="2008" name="J. Bacteriol.">
        <title>Comparative genome sequence analysis of multidrug-resistant Acinetobacter baumannii.</title>
        <authorList>
            <person name="Adams M.D."/>
            <person name="Goglin K."/>
            <person name="Molyneaux N."/>
            <person name="Hujer K.M."/>
            <person name="Lavender H."/>
            <person name="Jamison J.J."/>
            <person name="MacDonald I.J."/>
            <person name="Martin K.M."/>
            <person name="Russo T."/>
            <person name="Campagnari A.A."/>
            <person name="Hujer A.M."/>
            <person name="Bonomo R.A."/>
            <person name="Gill S.R."/>
        </authorList>
    </citation>
    <scope>NUCLEOTIDE SEQUENCE [LARGE SCALE GENOMIC DNA]</scope>
    <source>
        <strain>AB0057</strain>
    </source>
</reference>
<dbReference type="EC" id="1.2.1.38" evidence="1"/>
<dbReference type="EMBL" id="CP001182">
    <property type="protein sequence ID" value="ACJ41618.1"/>
    <property type="molecule type" value="Genomic_DNA"/>
</dbReference>
<dbReference type="SMR" id="B7I933"/>
<dbReference type="KEGG" id="abn:AB57_2247"/>
<dbReference type="HOGENOM" id="CLU_006384_0_1_6"/>
<dbReference type="UniPathway" id="UPA00068">
    <property type="reaction ID" value="UER00108"/>
</dbReference>
<dbReference type="Proteomes" id="UP000007094">
    <property type="component" value="Chromosome"/>
</dbReference>
<dbReference type="GO" id="GO:0005737">
    <property type="term" value="C:cytoplasm"/>
    <property type="evidence" value="ECO:0007669"/>
    <property type="project" value="UniProtKB-SubCell"/>
</dbReference>
<dbReference type="GO" id="GO:0003942">
    <property type="term" value="F:N-acetyl-gamma-glutamyl-phosphate reductase activity"/>
    <property type="evidence" value="ECO:0007669"/>
    <property type="project" value="UniProtKB-UniRule"/>
</dbReference>
<dbReference type="GO" id="GO:0051287">
    <property type="term" value="F:NAD binding"/>
    <property type="evidence" value="ECO:0007669"/>
    <property type="project" value="InterPro"/>
</dbReference>
<dbReference type="GO" id="GO:0070401">
    <property type="term" value="F:NADP+ binding"/>
    <property type="evidence" value="ECO:0007669"/>
    <property type="project" value="InterPro"/>
</dbReference>
<dbReference type="GO" id="GO:0006526">
    <property type="term" value="P:L-arginine biosynthetic process"/>
    <property type="evidence" value="ECO:0007669"/>
    <property type="project" value="UniProtKB-UniRule"/>
</dbReference>
<dbReference type="CDD" id="cd23934">
    <property type="entry name" value="AGPR_1_C"/>
    <property type="match status" value="1"/>
</dbReference>
<dbReference type="CDD" id="cd17895">
    <property type="entry name" value="AGPR_1_N"/>
    <property type="match status" value="1"/>
</dbReference>
<dbReference type="FunFam" id="3.30.360.10:FF:000014">
    <property type="entry name" value="N-acetyl-gamma-glutamyl-phosphate reductase"/>
    <property type="match status" value="1"/>
</dbReference>
<dbReference type="Gene3D" id="3.30.360.10">
    <property type="entry name" value="Dihydrodipicolinate Reductase, domain 2"/>
    <property type="match status" value="1"/>
</dbReference>
<dbReference type="Gene3D" id="3.40.50.720">
    <property type="entry name" value="NAD(P)-binding Rossmann-like Domain"/>
    <property type="match status" value="1"/>
</dbReference>
<dbReference type="HAMAP" id="MF_00150">
    <property type="entry name" value="ArgC_type1"/>
    <property type="match status" value="1"/>
</dbReference>
<dbReference type="InterPro" id="IPR023013">
    <property type="entry name" value="AGPR_AS"/>
</dbReference>
<dbReference type="InterPro" id="IPR000706">
    <property type="entry name" value="AGPR_type-1"/>
</dbReference>
<dbReference type="InterPro" id="IPR036291">
    <property type="entry name" value="NAD(P)-bd_dom_sf"/>
</dbReference>
<dbReference type="InterPro" id="IPR050085">
    <property type="entry name" value="NAGSA_dehydrogenase"/>
</dbReference>
<dbReference type="InterPro" id="IPR000534">
    <property type="entry name" value="Semialdehyde_DH_NAD-bd"/>
</dbReference>
<dbReference type="NCBIfam" id="TIGR01850">
    <property type="entry name" value="argC"/>
    <property type="match status" value="1"/>
</dbReference>
<dbReference type="PANTHER" id="PTHR32338:SF10">
    <property type="entry name" value="N-ACETYL-GAMMA-GLUTAMYL-PHOSPHATE REDUCTASE, CHLOROPLASTIC-RELATED"/>
    <property type="match status" value="1"/>
</dbReference>
<dbReference type="PANTHER" id="PTHR32338">
    <property type="entry name" value="N-ACETYL-GAMMA-GLUTAMYL-PHOSPHATE REDUCTASE, CHLOROPLASTIC-RELATED-RELATED"/>
    <property type="match status" value="1"/>
</dbReference>
<dbReference type="Pfam" id="PF01118">
    <property type="entry name" value="Semialdhyde_dh"/>
    <property type="match status" value="1"/>
</dbReference>
<dbReference type="Pfam" id="PF22698">
    <property type="entry name" value="Semialdhyde_dhC_1"/>
    <property type="match status" value="1"/>
</dbReference>
<dbReference type="SMART" id="SM00859">
    <property type="entry name" value="Semialdhyde_dh"/>
    <property type="match status" value="1"/>
</dbReference>
<dbReference type="SUPFAM" id="SSF55347">
    <property type="entry name" value="Glyceraldehyde-3-phosphate dehydrogenase-like, C-terminal domain"/>
    <property type="match status" value="1"/>
</dbReference>
<dbReference type="SUPFAM" id="SSF51735">
    <property type="entry name" value="NAD(P)-binding Rossmann-fold domains"/>
    <property type="match status" value="1"/>
</dbReference>
<dbReference type="PROSITE" id="PS01224">
    <property type="entry name" value="ARGC"/>
    <property type="match status" value="1"/>
</dbReference>
<accession>B7I933</accession>
<proteinExistence type="inferred from homology"/>
<feature type="chain" id="PRO_1000118050" description="N-acetyl-gamma-glutamyl-phosphate reductase">
    <location>
        <begin position="1"/>
        <end position="349"/>
    </location>
</feature>
<feature type="active site" evidence="1">
    <location>
        <position position="149"/>
    </location>
</feature>
<comment type="function">
    <text evidence="1">Catalyzes the NADPH-dependent reduction of N-acetyl-5-glutamyl phosphate to yield N-acetyl-L-glutamate 5-semialdehyde.</text>
</comment>
<comment type="catalytic activity">
    <reaction evidence="1">
        <text>N-acetyl-L-glutamate 5-semialdehyde + phosphate + NADP(+) = N-acetyl-L-glutamyl 5-phosphate + NADPH + H(+)</text>
        <dbReference type="Rhea" id="RHEA:21588"/>
        <dbReference type="ChEBI" id="CHEBI:15378"/>
        <dbReference type="ChEBI" id="CHEBI:29123"/>
        <dbReference type="ChEBI" id="CHEBI:43474"/>
        <dbReference type="ChEBI" id="CHEBI:57783"/>
        <dbReference type="ChEBI" id="CHEBI:57936"/>
        <dbReference type="ChEBI" id="CHEBI:58349"/>
        <dbReference type="EC" id="1.2.1.38"/>
    </reaction>
</comment>
<comment type="pathway">
    <text evidence="1">Amino-acid biosynthesis; L-arginine biosynthesis; N(2)-acetyl-L-ornithine from L-glutamate: step 3/4.</text>
</comment>
<comment type="subcellular location">
    <subcellularLocation>
        <location evidence="1">Cytoplasm</location>
    </subcellularLocation>
</comment>
<comment type="similarity">
    <text evidence="1">Belongs to the NAGSA dehydrogenase family. Type 1 subfamily.</text>
</comment>
<gene>
    <name evidence="1" type="primary">argC</name>
    <name type="ordered locus">AB57_2247</name>
</gene>
<organism>
    <name type="scientific">Acinetobacter baumannii (strain AB0057)</name>
    <dbReference type="NCBI Taxonomy" id="480119"/>
    <lineage>
        <taxon>Bacteria</taxon>
        <taxon>Pseudomonadati</taxon>
        <taxon>Pseudomonadota</taxon>
        <taxon>Gammaproteobacteria</taxon>
        <taxon>Moraxellales</taxon>
        <taxon>Moraxellaceae</taxon>
        <taxon>Acinetobacter</taxon>
        <taxon>Acinetobacter calcoaceticus/baumannii complex</taxon>
    </lineage>
</organism>
<name>ARGC_ACIB5</name>
<protein>
    <recommendedName>
        <fullName evidence="1">N-acetyl-gamma-glutamyl-phosphate reductase</fullName>
        <shortName evidence="1">AGPR</shortName>
        <ecNumber evidence="1">1.2.1.38</ecNumber>
    </recommendedName>
    <alternativeName>
        <fullName evidence="1">N-acetyl-glutamate semialdehyde dehydrogenase</fullName>
        <shortName evidence="1">NAGSA dehydrogenase</shortName>
    </alternativeName>
</protein>
<sequence length="349" mass="38012">MISVGIVGGTGYTGVELLRILLRHPKAQVRVLTSRTEAGKPVADMFPNLRGHTDLQFSDLNIDALKECDVVFFATPHGVAMQHAKDLIAAGTKVIDLAADFRLQNLEQFEKWYGMEHACPDVLKDSVYGLTELNREKIKQAQVIGNPGCYPTTVQLGLAPLLKSAQALIETKNIIIDAKSGVSGAGRKASLGMIYSENADNFKAYGVAGHRHHPEIVEALENIAGKKDVFEGLLFVPHLVPMIRGMLSTIYVDLTEAGKQTALQALYENFYANEKFVDVMPANSSPETRSVRGANELRIALYKPQPNKLIILAAQDNLVKGASGQAVQNMNLMFGFNEDEGLQGIGLLP</sequence>
<keyword id="KW-0028">Amino-acid biosynthesis</keyword>
<keyword id="KW-0055">Arginine biosynthesis</keyword>
<keyword id="KW-0963">Cytoplasm</keyword>
<keyword id="KW-0521">NADP</keyword>
<keyword id="KW-0560">Oxidoreductase</keyword>
<evidence type="ECO:0000255" key="1">
    <source>
        <dbReference type="HAMAP-Rule" id="MF_00150"/>
    </source>
</evidence>